<name>ADD_ECOBW</name>
<keyword id="KW-0378">Hydrolase</keyword>
<keyword id="KW-0479">Metal-binding</keyword>
<keyword id="KW-0546">Nucleotide metabolism</keyword>
<keyword id="KW-0862">Zinc</keyword>
<evidence type="ECO:0000255" key="1">
    <source>
        <dbReference type="HAMAP-Rule" id="MF_00540"/>
    </source>
</evidence>
<organism>
    <name type="scientific">Escherichia coli (strain K12 / MC4100 / BW2952)</name>
    <dbReference type="NCBI Taxonomy" id="595496"/>
    <lineage>
        <taxon>Bacteria</taxon>
        <taxon>Pseudomonadati</taxon>
        <taxon>Pseudomonadota</taxon>
        <taxon>Gammaproteobacteria</taxon>
        <taxon>Enterobacterales</taxon>
        <taxon>Enterobacteriaceae</taxon>
        <taxon>Escherichia</taxon>
    </lineage>
</organism>
<reference key="1">
    <citation type="journal article" date="2009" name="J. Bacteriol.">
        <title>Genomic sequencing reveals regulatory mutations and recombinational events in the widely used MC4100 lineage of Escherichia coli K-12.</title>
        <authorList>
            <person name="Ferenci T."/>
            <person name="Zhou Z."/>
            <person name="Betteridge T."/>
            <person name="Ren Y."/>
            <person name="Liu Y."/>
            <person name="Feng L."/>
            <person name="Reeves P.R."/>
            <person name="Wang L."/>
        </authorList>
    </citation>
    <scope>NUCLEOTIDE SEQUENCE [LARGE SCALE GENOMIC DNA]</scope>
    <source>
        <strain>K12 / MC4100 / BW2952</strain>
    </source>
</reference>
<accession>C4ZY85</accession>
<comment type="function">
    <text evidence="1">Catalyzes the hydrolytic deamination of adenosine and 2-deoxyadenosine.</text>
</comment>
<comment type="catalytic activity">
    <reaction evidence="1">
        <text>adenosine + H2O + H(+) = inosine + NH4(+)</text>
        <dbReference type="Rhea" id="RHEA:24408"/>
        <dbReference type="ChEBI" id="CHEBI:15377"/>
        <dbReference type="ChEBI" id="CHEBI:15378"/>
        <dbReference type="ChEBI" id="CHEBI:16335"/>
        <dbReference type="ChEBI" id="CHEBI:17596"/>
        <dbReference type="ChEBI" id="CHEBI:28938"/>
        <dbReference type="EC" id="3.5.4.4"/>
    </reaction>
    <physiologicalReaction direction="left-to-right" evidence="1">
        <dbReference type="Rhea" id="RHEA:24409"/>
    </physiologicalReaction>
</comment>
<comment type="catalytic activity">
    <reaction evidence="1">
        <text>2'-deoxyadenosine + H2O + H(+) = 2'-deoxyinosine + NH4(+)</text>
        <dbReference type="Rhea" id="RHEA:28190"/>
        <dbReference type="ChEBI" id="CHEBI:15377"/>
        <dbReference type="ChEBI" id="CHEBI:15378"/>
        <dbReference type="ChEBI" id="CHEBI:17256"/>
        <dbReference type="ChEBI" id="CHEBI:28938"/>
        <dbReference type="ChEBI" id="CHEBI:28997"/>
        <dbReference type="EC" id="3.5.4.4"/>
    </reaction>
    <physiologicalReaction direction="left-to-right" evidence="1">
        <dbReference type="Rhea" id="RHEA:28191"/>
    </physiologicalReaction>
</comment>
<comment type="cofactor">
    <cofactor evidence="1">
        <name>Zn(2+)</name>
        <dbReference type="ChEBI" id="CHEBI:29105"/>
    </cofactor>
    <text evidence="1">Binds 1 zinc ion per subunit.</text>
</comment>
<comment type="similarity">
    <text evidence="1">Belongs to the metallo-dependent hydrolases superfamily. Adenosine and AMP deaminases family. Adenosine deaminase subfamily.</text>
</comment>
<dbReference type="EC" id="3.5.4.4" evidence="1"/>
<dbReference type="EMBL" id="CP001396">
    <property type="protein sequence ID" value="ACR61930.1"/>
    <property type="molecule type" value="Genomic_DNA"/>
</dbReference>
<dbReference type="RefSeq" id="WP_000567490.1">
    <property type="nucleotide sequence ID" value="NC_012759.1"/>
</dbReference>
<dbReference type="SMR" id="C4ZY85"/>
<dbReference type="GeneID" id="75204467"/>
<dbReference type="KEGG" id="ebw:BWG_1437"/>
<dbReference type="HOGENOM" id="CLU_039228_0_2_6"/>
<dbReference type="GO" id="GO:0005829">
    <property type="term" value="C:cytosol"/>
    <property type="evidence" value="ECO:0007669"/>
    <property type="project" value="TreeGrafter"/>
</dbReference>
<dbReference type="GO" id="GO:0046936">
    <property type="term" value="F:2'-deoxyadenosine deaminase activity"/>
    <property type="evidence" value="ECO:0007669"/>
    <property type="project" value="RHEA"/>
</dbReference>
<dbReference type="GO" id="GO:0004000">
    <property type="term" value="F:adenosine deaminase activity"/>
    <property type="evidence" value="ECO:0007669"/>
    <property type="project" value="UniProtKB-UniRule"/>
</dbReference>
<dbReference type="GO" id="GO:0008270">
    <property type="term" value="F:zinc ion binding"/>
    <property type="evidence" value="ECO:0007669"/>
    <property type="project" value="UniProtKB-UniRule"/>
</dbReference>
<dbReference type="GO" id="GO:0006154">
    <property type="term" value="P:adenosine catabolic process"/>
    <property type="evidence" value="ECO:0007669"/>
    <property type="project" value="TreeGrafter"/>
</dbReference>
<dbReference type="GO" id="GO:0043103">
    <property type="term" value="P:hypoxanthine salvage"/>
    <property type="evidence" value="ECO:0007669"/>
    <property type="project" value="TreeGrafter"/>
</dbReference>
<dbReference type="GO" id="GO:0046103">
    <property type="term" value="P:inosine biosynthetic process"/>
    <property type="evidence" value="ECO:0007669"/>
    <property type="project" value="TreeGrafter"/>
</dbReference>
<dbReference type="GO" id="GO:0009117">
    <property type="term" value="P:nucleotide metabolic process"/>
    <property type="evidence" value="ECO:0007669"/>
    <property type="project" value="UniProtKB-KW"/>
</dbReference>
<dbReference type="GO" id="GO:0009168">
    <property type="term" value="P:purine ribonucleoside monophosphate biosynthetic process"/>
    <property type="evidence" value="ECO:0007669"/>
    <property type="project" value="UniProtKB-UniRule"/>
</dbReference>
<dbReference type="CDD" id="cd01320">
    <property type="entry name" value="ADA"/>
    <property type="match status" value="1"/>
</dbReference>
<dbReference type="FunFam" id="3.20.20.140:FF:000009">
    <property type="entry name" value="Adenosine deaminase"/>
    <property type="match status" value="1"/>
</dbReference>
<dbReference type="Gene3D" id="3.20.20.140">
    <property type="entry name" value="Metal-dependent hydrolases"/>
    <property type="match status" value="1"/>
</dbReference>
<dbReference type="HAMAP" id="MF_00540">
    <property type="entry name" value="A_deaminase"/>
    <property type="match status" value="1"/>
</dbReference>
<dbReference type="InterPro" id="IPR006650">
    <property type="entry name" value="A/AMP_deam_AS"/>
</dbReference>
<dbReference type="InterPro" id="IPR028893">
    <property type="entry name" value="A_deaminase"/>
</dbReference>
<dbReference type="InterPro" id="IPR001365">
    <property type="entry name" value="A_deaminase_dom"/>
</dbReference>
<dbReference type="InterPro" id="IPR006330">
    <property type="entry name" value="Ado/ade_deaminase"/>
</dbReference>
<dbReference type="InterPro" id="IPR032466">
    <property type="entry name" value="Metal_Hydrolase"/>
</dbReference>
<dbReference type="NCBIfam" id="TIGR01430">
    <property type="entry name" value="aden_deam"/>
    <property type="match status" value="1"/>
</dbReference>
<dbReference type="NCBIfam" id="NF006846">
    <property type="entry name" value="PRK09358.1-1"/>
    <property type="match status" value="1"/>
</dbReference>
<dbReference type="PANTHER" id="PTHR11409">
    <property type="entry name" value="ADENOSINE DEAMINASE"/>
    <property type="match status" value="1"/>
</dbReference>
<dbReference type="PANTHER" id="PTHR11409:SF43">
    <property type="entry name" value="ADENOSINE DEAMINASE"/>
    <property type="match status" value="1"/>
</dbReference>
<dbReference type="Pfam" id="PF00962">
    <property type="entry name" value="A_deaminase"/>
    <property type="match status" value="1"/>
</dbReference>
<dbReference type="SUPFAM" id="SSF51556">
    <property type="entry name" value="Metallo-dependent hydrolases"/>
    <property type="match status" value="1"/>
</dbReference>
<dbReference type="PROSITE" id="PS00485">
    <property type="entry name" value="A_DEAMINASE"/>
    <property type="match status" value="1"/>
</dbReference>
<gene>
    <name evidence="1" type="primary">add</name>
    <name type="ordered locus">BWG_1437</name>
</gene>
<feature type="chain" id="PRO_1000211947" description="Adenosine deaminase">
    <location>
        <begin position="1"/>
        <end position="333"/>
    </location>
</feature>
<feature type="active site" description="Proton donor" evidence="1">
    <location>
        <position position="200"/>
    </location>
</feature>
<feature type="binding site" evidence="1">
    <location>
        <position position="12"/>
    </location>
    <ligand>
        <name>Zn(2+)</name>
        <dbReference type="ChEBI" id="CHEBI:29105"/>
        <note>catalytic</note>
    </ligand>
</feature>
<feature type="binding site" evidence="1">
    <location>
        <position position="14"/>
    </location>
    <ligand>
        <name>substrate</name>
    </ligand>
</feature>
<feature type="binding site" evidence="1">
    <location>
        <position position="14"/>
    </location>
    <ligand>
        <name>Zn(2+)</name>
        <dbReference type="ChEBI" id="CHEBI:29105"/>
        <note>catalytic</note>
    </ligand>
</feature>
<feature type="binding site" evidence="1">
    <location>
        <position position="16"/>
    </location>
    <ligand>
        <name>substrate</name>
    </ligand>
</feature>
<feature type="binding site" evidence="1">
    <location>
        <position position="170"/>
    </location>
    <ligand>
        <name>substrate</name>
    </ligand>
</feature>
<feature type="binding site" evidence="1">
    <location>
        <position position="197"/>
    </location>
    <ligand>
        <name>Zn(2+)</name>
        <dbReference type="ChEBI" id="CHEBI:29105"/>
        <note>catalytic</note>
    </ligand>
</feature>
<feature type="binding site" evidence="1">
    <location>
        <position position="278"/>
    </location>
    <ligand>
        <name>Zn(2+)</name>
        <dbReference type="ChEBI" id="CHEBI:29105"/>
        <note>catalytic</note>
    </ligand>
</feature>
<feature type="binding site" evidence="1">
    <location>
        <position position="279"/>
    </location>
    <ligand>
        <name>substrate</name>
    </ligand>
</feature>
<feature type="site" description="Important for catalytic activity" evidence="1">
    <location>
        <position position="221"/>
    </location>
</feature>
<sequence>MIDTTLPLTDIHRHLDGNIRPQTILELGRQYNISLPAQSLETLIPHVQVIANEPDLVSFLTKLDWGVKVLASLDACRRVAFENIEDAARHGLHYVELRFSPGYMAMAHQLPVAGVVEAVIDGVREGCRTFGVQAKLIGIMSRTFGEAACQQELEAFLAHRDQITALDLAGDELGFPGSLFLSHFNRARDAGWHITVHAGEAAGPESIWQAIRELGAERIGHGVKAIEDRALMDFLAEQQIGIESCLTSNIQTSTVAELAAHPLKTFLEHGIRASINTDDPGVQGVDIIHEYTVAAPAAGLSREQIRQAQINGLEMAFLSAEEKRALREKVAAK</sequence>
<proteinExistence type="inferred from homology"/>
<protein>
    <recommendedName>
        <fullName evidence="1">Adenosine deaminase</fullName>
        <ecNumber evidence="1">3.5.4.4</ecNumber>
    </recommendedName>
    <alternativeName>
        <fullName evidence="1">Adenosine aminohydrolase</fullName>
    </alternativeName>
</protein>